<name>LGT_PARPJ</name>
<evidence type="ECO:0000255" key="1">
    <source>
        <dbReference type="HAMAP-Rule" id="MF_01147"/>
    </source>
</evidence>
<protein>
    <recommendedName>
        <fullName evidence="1">Phosphatidylglycerol--prolipoprotein diacylglyceryl transferase</fullName>
        <ecNumber evidence="1">2.5.1.145</ecNumber>
    </recommendedName>
</protein>
<dbReference type="EC" id="2.5.1.145" evidence="1"/>
<dbReference type="EMBL" id="CP001052">
    <property type="protein sequence ID" value="ACD15409.1"/>
    <property type="molecule type" value="Genomic_DNA"/>
</dbReference>
<dbReference type="RefSeq" id="WP_012432040.1">
    <property type="nucleotide sequence ID" value="NC_010681.1"/>
</dbReference>
<dbReference type="SMR" id="B2T152"/>
<dbReference type="STRING" id="398527.Bphyt_0990"/>
<dbReference type="KEGG" id="bpy:Bphyt_0990"/>
<dbReference type="eggNOG" id="COG0682">
    <property type="taxonomic scope" value="Bacteria"/>
</dbReference>
<dbReference type="HOGENOM" id="CLU_013386_1_0_4"/>
<dbReference type="OrthoDB" id="871140at2"/>
<dbReference type="UniPathway" id="UPA00664"/>
<dbReference type="Proteomes" id="UP000001739">
    <property type="component" value="Chromosome 1"/>
</dbReference>
<dbReference type="GO" id="GO:0005886">
    <property type="term" value="C:plasma membrane"/>
    <property type="evidence" value="ECO:0007669"/>
    <property type="project" value="UniProtKB-SubCell"/>
</dbReference>
<dbReference type="GO" id="GO:0008961">
    <property type="term" value="F:phosphatidylglycerol-prolipoprotein diacylglyceryl transferase activity"/>
    <property type="evidence" value="ECO:0007669"/>
    <property type="project" value="UniProtKB-UniRule"/>
</dbReference>
<dbReference type="GO" id="GO:0042158">
    <property type="term" value="P:lipoprotein biosynthetic process"/>
    <property type="evidence" value="ECO:0007669"/>
    <property type="project" value="UniProtKB-UniRule"/>
</dbReference>
<dbReference type="HAMAP" id="MF_01147">
    <property type="entry name" value="Lgt"/>
    <property type="match status" value="1"/>
</dbReference>
<dbReference type="InterPro" id="IPR001640">
    <property type="entry name" value="Lgt"/>
</dbReference>
<dbReference type="NCBIfam" id="TIGR00544">
    <property type="entry name" value="lgt"/>
    <property type="match status" value="1"/>
</dbReference>
<dbReference type="PANTHER" id="PTHR30589:SF0">
    <property type="entry name" value="PHOSPHATIDYLGLYCEROL--PROLIPOPROTEIN DIACYLGLYCERYL TRANSFERASE"/>
    <property type="match status" value="1"/>
</dbReference>
<dbReference type="PANTHER" id="PTHR30589">
    <property type="entry name" value="PROLIPOPROTEIN DIACYLGLYCERYL TRANSFERASE"/>
    <property type="match status" value="1"/>
</dbReference>
<dbReference type="Pfam" id="PF01790">
    <property type="entry name" value="LGT"/>
    <property type="match status" value="1"/>
</dbReference>
<dbReference type="PROSITE" id="PS01311">
    <property type="entry name" value="LGT"/>
    <property type="match status" value="1"/>
</dbReference>
<organism>
    <name type="scientific">Paraburkholderia phytofirmans (strain DSM 17436 / LMG 22146 / PsJN)</name>
    <name type="common">Burkholderia phytofirmans</name>
    <dbReference type="NCBI Taxonomy" id="398527"/>
    <lineage>
        <taxon>Bacteria</taxon>
        <taxon>Pseudomonadati</taxon>
        <taxon>Pseudomonadota</taxon>
        <taxon>Betaproteobacteria</taxon>
        <taxon>Burkholderiales</taxon>
        <taxon>Burkholderiaceae</taxon>
        <taxon>Paraburkholderia</taxon>
    </lineage>
</organism>
<proteinExistence type="inferred from homology"/>
<accession>B2T152</accession>
<gene>
    <name evidence="1" type="primary">lgt</name>
    <name type="ordered locus">Bphyt_0990</name>
</gene>
<feature type="chain" id="PRO_1000137412" description="Phosphatidylglycerol--prolipoprotein diacylglyceryl transferase">
    <location>
        <begin position="1"/>
        <end position="301"/>
    </location>
</feature>
<feature type="transmembrane region" description="Helical" evidence="1">
    <location>
        <begin position="17"/>
        <end position="37"/>
    </location>
</feature>
<feature type="transmembrane region" description="Helical" evidence="1">
    <location>
        <begin position="59"/>
        <end position="79"/>
    </location>
</feature>
<feature type="transmembrane region" description="Helical" evidence="1">
    <location>
        <begin position="97"/>
        <end position="117"/>
    </location>
</feature>
<feature type="transmembrane region" description="Helical" evidence="1">
    <location>
        <begin position="230"/>
        <end position="250"/>
    </location>
</feature>
<feature type="transmembrane region" description="Helical" evidence="1">
    <location>
        <begin position="265"/>
        <end position="285"/>
    </location>
</feature>
<feature type="binding site" evidence="1">
    <location>
        <position position="142"/>
    </location>
    <ligand>
        <name>a 1,2-diacyl-sn-glycero-3-phospho-(1'-sn-glycerol)</name>
        <dbReference type="ChEBI" id="CHEBI:64716"/>
    </ligand>
</feature>
<keyword id="KW-0997">Cell inner membrane</keyword>
<keyword id="KW-1003">Cell membrane</keyword>
<keyword id="KW-0472">Membrane</keyword>
<keyword id="KW-0808">Transferase</keyword>
<keyword id="KW-0812">Transmembrane</keyword>
<keyword id="KW-1133">Transmembrane helix</keyword>
<reference key="1">
    <citation type="journal article" date="2011" name="J. Bacteriol.">
        <title>Complete genome sequence of the plant growth-promoting endophyte Burkholderia phytofirmans strain PsJN.</title>
        <authorList>
            <person name="Weilharter A."/>
            <person name="Mitter B."/>
            <person name="Shin M.V."/>
            <person name="Chain P.S."/>
            <person name="Nowak J."/>
            <person name="Sessitsch A."/>
        </authorList>
    </citation>
    <scope>NUCLEOTIDE SEQUENCE [LARGE SCALE GENOMIC DNA]</scope>
    <source>
        <strain>DSM 17436 / LMG 22146 / PsJN</strain>
    </source>
</reference>
<comment type="function">
    <text evidence="1">Catalyzes the transfer of the diacylglyceryl group from phosphatidylglycerol to the sulfhydryl group of the N-terminal cysteine of a prolipoprotein, the first step in the formation of mature lipoproteins.</text>
</comment>
<comment type="catalytic activity">
    <reaction evidence="1">
        <text>L-cysteinyl-[prolipoprotein] + a 1,2-diacyl-sn-glycero-3-phospho-(1'-sn-glycerol) = an S-1,2-diacyl-sn-glyceryl-L-cysteinyl-[prolipoprotein] + sn-glycerol 1-phosphate + H(+)</text>
        <dbReference type="Rhea" id="RHEA:56712"/>
        <dbReference type="Rhea" id="RHEA-COMP:14679"/>
        <dbReference type="Rhea" id="RHEA-COMP:14680"/>
        <dbReference type="ChEBI" id="CHEBI:15378"/>
        <dbReference type="ChEBI" id="CHEBI:29950"/>
        <dbReference type="ChEBI" id="CHEBI:57685"/>
        <dbReference type="ChEBI" id="CHEBI:64716"/>
        <dbReference type="ChEBI" id="CHEBI:140658"/>
        <dbReference type="EC" id="2.5.1.145"/>
    </reaction>
</comment>
<comment type="pathway">
    <text evidence="1">Protein modification; lipoprotein biosynthesis (diacylglyceryl transfer).</text>
</comment>
<comment type="subcellular location">
    <subcellularLocation>
        <location evidence="1">Cell inner membrane</location>
        <topology evidence="1">Multi-pass membrane protein</topology>
    </subcellularLocation>
</comment>
<comment type="similarity">
    <text evidence="1">Belongs to the Lgt family.</text>
</comment>
<sequence length="301" mass="33592">MLIHPNFDPIAIHLGPLAVRWYGLMYLVAFIAAIVVGRLRLRLPYVAAQGWTVKDIDDMLFYGVLGTILGGRLGYVLFYKASFYFAHPLDIFKVWEGGMSFHGGFLGVTLAMVLFAYQRKRSWLQVTDFVAPMVPTGLAAGRLGNFINGELWGRVTDPSSPWAMLFPGAAPDDAAWLTAHPQLAAQWHLNEVFAQYHMLPRHPSELYEIALEGVALFFVLIFFSRKPKPMGAISAVFLIGYGLARFTVEFAREPDDFLGLLAMGLSMGQWLSLPMILVGIGLLVWSYRRARHEPAQAVSVN</sequence>